<protein>
    <recommendedName>
        <fullName>Leucine zipper putative tumor suppressor 1</fullName>
    </recommendedName>
    <alternativeName>
        <fullName>PSD-Zip70</fullName>
    </alternativeName>
</protein>
<gene>
    <name type="primary">Lzts1</name>
</gene>
<comment type="function">
    <text evidence="1">Involved in the regulation of cell growth. May stabilize the active CDC2-cyclin B1 complex and thereby contribute to the regulation of the cell cycle and the prevention of uncontrolled cell proliferation. May act as tumor suppressor (By similarity).</text>
</comment>
<comment type="subunit">
    <text evidence="1">Binds EEF1G, TLK2 and CDK1.</text>
</comment>
<comment type="subcellular location">
    <subcellularLocation>
        <location evidence="4">Cytoplasm</location>
    </subcellularLocation>
    <subcellularLocation>
        <location evidence="1">Cell membrane</location>
    </subcellularLocation>
    <subcellularLocation>
        <location evidence="4">Cell projection</location>
        <location evidence="4">Dendritic spine</location>
    </subcellularLocation>
    <subcellularLocation>
        <location evidence="4">Postsynaptic density</location>
    </subcellularLocation>
    <subcellularLocation>
        <location evidence="4">Synapse</location>
    </subcellularLocation>
    <text evidence="1">Associated with the plasma membrane and with microtubules (By similarity). Detected in dendritic spines, especially in the postsynaptic density.</text>
</comment>
<comment type="tissue specificity">
    <text evidence="4">Highly expressed in brain, in particular in cortex, the CA2 region of the hippocampus, olfactory bulb, striatum and pons. Not detectable in the other tissues tested.</text>
</comment>
<comment type="developmental stage">
    <text>Highly expressed in cerebellum in 1 to 3 week old rats. Expression levels before and after are much lower. Expression in total brain increases slightly during development and remains at a constant high level after birth.</text>
</comment>
<comment type="PTM">
    <text evidence="1">Phosphorylated on serine residues. Hyperphosphorylated by the cAMP-dependent kinase PKA during cell-cycle progression (By similarity).</text>
</comment>
<comment type="similarity">
    <text evidence="5">Belongs to the LZTS family.</text>
</comment>
<organism>
    <name type="scientific">Rattus norvegicus</name>
    <name type="common">Rat</name>
    <dbReference type="NCBI Taxonomy" id="10116"/>
    <lineage>
        <taxon>Eukaryota</taxon>
        <taxon>Metazoa</taxon>
        <taxon>Chordata</taxon>
        <taxon>Craniata</taxon>
        <taxon>Vertebrata</taxon>
        <taxon>Euteleostomi</taxon>
        <taxon>Mammalia</taxon>
        <taxon>Eutheria</taxon>
        <taxon>Euarchontoglires</taxon>
        <taxon>Glires</taxon>
        <taxon>Rodentia</taxon>
        <taxon>Myomorpha</taxon>
        <taxon>Muroidea</taxon>
        <taxon>Muridae</taxon>
        <taxon>Murinae</taxon>
        <taxon>Rattus</taxon>
    </lineage>
</organism>
<sequence length="601" mass="67565">MGSVSSLISGHSLHSKHCRASQYKLRKSSHLKKLNRYSDGLLRFGFSQDSGRGKSSSKMGKSEDFFYIKVSQKARGSHRPDYTALSSGDMGGQTGVDFDPATPPKLMPFSSQLEMSSDKAAVRPTAFKPVLPRSGAILHSSPESTNHQLHPMPPDKPKEQELKPGLCSGALSDSGRNSMSSLPTHSTTSSYQLDPLVTPVGPTSRFGGSAHNITQGIILQDSNMMSLKALSFSDGGSKLAHPGKVEKGSSCVRSPLSTDECTIQELEQKLLQRETALQKLQRSFDEKEFASGQTFEERPRRTRDELECLEPKSKLKPASQKSQRTQQVLQLQVLQLQQEKRQLRQELESLMKEQDLLETKLRSYEREKTNFAPALEETQWEVCQKSGEISLLKQQLKESQMEVNAKASEILSLKAQLKDTRGKLEGMELKTQDLESALRTKGLELEVCENELQRKKNEAELLREKVNLLEQELLELRAQAALHRDAAPLGPPGIGLTFSEDIPALQRELDRLRAELKEERQGHDQMSSGFQHERLVWKEEKEKVIQYQKQLQQSYLAMYQRNQRLEKALQQLARGDIAGEPFEIDLEGADIPYEDIIATEI</sequence>
<accession>Q8CFC9</accession>
<keyword id="KW-0131">Cell cycle</keyword>
<keyword id="KW-1003">Cell membrane</keyword>
<keyword id="KW-0966">Cell projection</keyword>
<keyword id="KW-0175">Coiled coil</keyword>
<keyword id="KW-0963">Cytoplasm</keyword>
<keyword id="KW-0449">Lipoprotein</keyword>
<keyword id="KW-0472">Membrane</keyword>
<keyword id="KW-0519">Myristate</keyword>
<keyword id="KW-1185">Reference proteome</keyword>
<keyword id="KW-0770">Synapse</keyword>
<keyword id="KW-0043">Tumor suppressor</keyword>
<evidence type="ECO:0000250" key="1"/>
<evidence type="ECO:0000255" key="2"/>
<evidence type="ECO:0000256" key="3">
    <source>
        <dbReference type="SAM" id="MobiDB-lite"/>
    </source>
</evidence>
<evidence type="ECO:0000269" key="4">
    <source>
    </source>
</evidence>
<evidence type="ECO:0000305" key="5"/>
<feature type="initiator methionine" description="Removed">
    <location>
        <position position="1"/>
    </location>
</feature>
<feature type="chain" id="PRO_0000182973" description="Leucine zipper putative tumor suppressor 1">
    <location>
        <begin position="2"/>
        <end position="601"/>
    </location>
</feature>
<feature type="region of interest" description="Disordered" evidence="3">
    <location>
        <begin position="135"/>
        <end position="190"/>
    </location>
</feature>
<feature type="coiled-coil region" evidence="2">
    <location>
        <begin position="255"/>
        <end position="573"/>
    </location>
</feature>
<feature type="compositionally biased region" description="Basic and acidic residues" evidence="3">
    <location>
        <begin position="153"/>
        <end position="162"/>
    </location>
</feature>
<feature type="compositionally biased region" description="Polar residues" evidence="3">
    <location>
        <begin position="174"/>
        <end position="190"/>
    </location>
</feature>
<feature type="lipid moiety-binding region" description="N-myristoyl glycine" evidence="4">
    <location>
        <position position="2"/>
    </location>
</feature>
<dbReference type="EMBL" id="AB075607">
    <property type="protein sequence ID" value="BAC16535.1"/>
    <property type="molecule type" value="mRNA"/>
</dbReference>
<dbReference type="RefSeq" id="NP_703200.1">
    <property type="nucleotide sequence ID" value="NM_153470.2"/>
</dbReference>
<dbReference type="RefSeq" id="XP_038950170.1">
    <property type="nucleotide sequence ID" value="XM_039094242.2"/>
</dbReference>
<dbReference type="SMR" id="Q8CFC9"/>
<dbReference type="FunCoup" id="Q8CFC9">
    <property type="interactions" value="713"/>
</dbReference>
<dbReference type="STRING" id="10116.ENSRNOP00000015800"/>
<dbReference type="GlyGen" id="Q8CFC9">
    <property type="glycosylation" value="1 site"/>
</dbReference>
<dbReference type="iPTMnet" id="Q8CFC9"/>
<dbReference type="PhosphoSitePlus" id="Q8CFC9"/>
<dbReference type="PaxDb" id="10116-ENSRNOP00000015800"/>
<dbReference type="Ensembl" id="ENSRNOT00000015799.5">
    <property type="protein sequence ID" value="ENSRNOP00000015800.2"/>
    <property type="gene ID" value="ENSRNOG00000011826.5"/>
</dbReference>
<dbReference type="GeneID" id="266711"/>
<dbReference type="KEGG" id="rno:266711"/>
<dbReference type="UCSC" id="RGD:708565">
    <property type="organism name" value="rat"/>
</dbReference>
<dbReference type="AGR" id="RGD:708565"/>
<dbReference type="CTD" id="11178"/>
<dbReference type="RGD" id="708565">
    <property type="gene designation" value="Lzts1"/>
</dbReference>
<dbReference type="eggNOG" id="ENOG502QRU7">
    <property type="taxonomic scope" value="Eukaryota"/>
</dbReference>
<dbReference type="GeneTree" id="ENSGT00940000154078"/>
<dbReference type="HOGENOM" id="CLU_026379_2_1_1"/>
<dbReference type="InParanoid" id="Q8CFC9"/>
<dbReference type="OMA" id="QKTRGSH"/>
<dbReference type="OrthoDB" id="10030037at2759"/>
<dbReference type="PhylomeDB" id="Q8CFC9"/>
<dbReference type="TreeFam" id="TF331420"/>
<dbReference type="PRO" id="PR:Q8CFC9"/>
<dbReference type="Proteomes" id="UP000002494">
    <property type="component" value="Chromosome 16"/>
</dbReference>
<dbReference type="Bgee" id="ENSRNOG00000011826">
    <property type="expression patterns" value="Expressed in frontal cortex and 17 other cell types or tissues"/>
</dbReference>
<dbReference type="GO" id="GO:0016324">
    <property type="term" value="C:apical plasma membrane"/>
    <property type="evidence" value="ECO:0000314"/>
    <property type="project" value="RGD"/>
</dbReference>
<dbReference type="GO" id="GO:0044297">
    <property type="term" value="C:cell body"/>
    <property type="evidence" value="ECO:0000314"/>
    <property type="project" value="RGD"/>
</dbReference>
<dbReference type="GO" id="GO:0005737">
    <property type="term" value="C:cytoplasm"/>
    <property type="evidence" value="ECO:0007669"/>
    <property type="project" value="UniProtKB-SubCell"/>
</dbReference>
<dbReference type="GO" id="GO:0043198">
    <property type="term" value="C:dendritic shaft"/>
    <property type="evidence" value="ECO:0000314"/>
    <property type="project" value="RGD"/>
</dbReference>
<dbReference type="GO" id="GO:0043197">
    <property type="term" value="C:dendritic spine"/>
    <property type="evidence" value="ECO:0000314"/>
    <property type="project" value="RGD"/>
</dbReference>
<dbReference type="GO" id="GO:0098978">
    <property type="term" value="C:glutamatergic synapse"/>
    <property type="evidence" value="ECO:0000314"/>
    <property type="project" value="SynGO"/>
</dbReference>
<dbReference type="GO" id="GO:0098839">
    <property type="term" value="C:postsynaptic density membrane"/>
    <property type="evidence" value="ECO:0000314"/>
    <property type="project" value="SynGO"/>
</dbReference>
<dbReference type="GO" id="GO:0045211">
    <property type="term" value="C:postsynaptic membrane"/>
    <property type="evidence" value="ECO:0000314"/>
    <property type="project" value="RGD"/>
</dbReference>
<dbReference type="GO" id="GO:0016242">
    <property type="term" value="P:negative regulation of macroautophagy"/>
    <property type="evidence" value="ECO:0000266"/>
    <property type="project" value="RGD"/>
</dbReference>
<dbReference type="GO" id="GO:0048814">
    <property type="term" value="P:regulation of dendrite morphogenesis"/>
    <property type="evidence" value="ECO:0000315"/>
    <property type="project" value="RGD"/>
</dbReference>
<dbReference type="GO" id="GO:0150052">
    <property type="term" value="P:regulation of postsynapse assembly"/>
    <property type="evidence" value="ECO:0000266"/>
    <property type="project" value="RGD"/>
</dbReference>
<dbReference type="GO" id="GO:0048167">
    <property type="term" value="P:regulation of synaptic plasticity"/>
    <property type="evidence" value="ECO:0000315"/>
    <property type="project" value="RGD"/>
</dbReference>
<dbReference type="InterPro" id="IPR045329">
    <property type="entry name" value="LZTS"/>
</dbReference>
<dbReference type="PANTHER" id="PTHR19354:SF5">
    <property type="entry name" value="ZIPPER PUTATIVE TUMOR SUPPRESSOR 1-RELATED"/>
    <property type="match status" value="1"/>
</dbReference>
<dbReference type="PANTHER" id="PTHR19354">
    <property type="entry name" value="ZIPPER PUTATIVE TUMOR SUPPRESSOR 2 HOMOLOG-LIKE PROTEIN-RELATED"/>
    <property type="match status" value="1"/>
</dbReference>
<dbReference type="Pfam" id="PF06818">
    <property type="entry name" value="Fez1"/>
    <property type="match status" value="1"/>
</dbReference>
<reference key="1">
    <citation type="journal article" date="2002" name="J. Cell Sci.">
        <title>The postsynaptic density and dendritic raft localization of PSD-Zip70, which contains an N-myristoylation sequence and leucine-zipper motifs.</title>
        <authorList>
            <person name="Konno D."/>
            <person name="Ko J.-A."/>
            <person name="Usui S."/>
            <person name="Hori K."/>
            <person name="Maruoka H."/>
            <person name="Inui M."/>
            <person name="Fujikado T."/>
            <person name="Tano Y."/>
            <person name="Suzuki T."/>
            <person name="Tohyama K."/>
            <person name="Sobue K."/>
        </authorList>
    </citation>
    <scope>NUCLEOTIDE SEQUENCE [MRNA]</scope>
    <scope>MYRISTOYLATION AT GLY-2</scope>
    <scope>TISSUE SPECIFICITY</scope>
    <scope>SUBCELLULAR LOCATION</scope>
    <source>
        <strain>Sprague-Dawley</strain>
        <tissue>Brain</tissue>
    </source>
</reference>
<name>LZTS1_RAT</name>
<proteinExistence type="evidence at protein level"/>